<protein>
    <recommendedName>
        <fullName evidence="1">Acetylglutamate kinase</fullName>
        <ecNumber evidence="1">2.7.2.8</ecNumber>
    </recommendedName>
    <alternativeName>
        <fullName evidence="1">N-acetyl-L-glutamate 5-phosphotransferase</fullName>
    </alternativeName>
    <alternativeName>
        <fullName evidence="1">NAG kinase</fullName>
        <shortName evidence="1">NAGK</shortName>
    </alternativeName>
</protein>
<name>ARGB_METKA</name>
<keyword id="KW-0028">Amino-acid biosynthesis</keyword>
<keyword id="KW-0055">Arginine biosynthesis</keyword>
<keyword id="KW-0067">ATP-binding</keyword>
<keyword id="KW-0963">Cytoplasm</keyword>
<keyword id="KW-0418">Kinase</keyword>
<keyword id="KW-0547">Nucleotide-binding</keyword>
<keyword id="KW-1185">Reference proteome</keyword>
<keyword id="KW-0808">Transferase</keyword>
<accession>Q8TUX2</accession>
<gene>
    <name evidence="1" type="primary">argB</name>
    <name type="ordered locus">MK1631</name>
</gene>
<reference key="1">
    <citation type="journal article" date="2002" name="Proc. Natl. Acad. Sci. U.S.A.">
        <title>The complete genome of hyperthermophile Methanopyrus kandleri AV19 and monophyly of archaeal methanogens.</title>
        <authorList>
            <person name="Slesarev A.I."/>
            <person name="Mezhevaya K.V."/>
            <person name="Makarova K.S."/>
            <person name="Polushin N.N."/>
            <person name="Shcherbinina O.V."/>
            <person name="Shakhova V.V."/>
            <person name="Belova G.I."/>
            <person name="Aravind L."/>
            <person name="Natale D.A."/>
            <person name="Rogozin I.B."/>
            <person name="Tatusov R.L."/>
            <person name="Wolf Y.I."/>
            <person name="Stetter K.O."/>
            <person name="Malykh A.G."/>
            <person name="Koonin E.V."/>
            <person name="Kozyavkin S.A."/>
        </authorList>
    </citation>
    <scope>NUCLEOTIDE SEQUENCE [LARGE SCALE GENOMIC DNA]</scope>
    <source>
        <strain>AV19 / DSM 6324 / JCM 9639 / NBRC 100938</strain>
    </source>
</reference>
<comment type="function">
    <text evidence="1">Catalyzes the ATP-dependent phosphorylation of N-acetyl-L-glutamate.</text>
</comment>
<comment type="catalytic activity">
    <reaction evidence="1">
        <text>N-acetyl-L-glutamate + ATP = N-acetyl-L-glutamyl 5-phosphate + ADP</text>
        <dbReference type="Rhea" id="RHEA:14629"/>
        <dbReference type="ChEBI" id="CHEBI:30616"/>
        <dbReference type="ChEBI" id="CHEBI:44337"/>
        <dbReference type="ChEBI" id="CHEBI:57936"/>
        <dbReference type="ChEBI" id="CHEBI:456216"/>
        <dbReference type="EC" id="2.7.2.8"/>
    </reaction>
</comment>
<comment type="pathway">
    <text evidence="1">Amino-acid biosynthesis; L-arginine biosynthesis; N(2)-acetyl-L-ornithine from L-glutamate: step 2/4.</text>
</comment>
<comment type="subcellular location">
    <subcellularLocation>
        <location evidence="1">Cytoplasm</location>
    </subcellularLocation>
</comment>
<comment type="similarity">
    <text evidence="1">Belongs to the acetylglutamate kinase family. ArgB subfamily.</text>
</comment>
<feature type="chain" id="PRO_0000112695" description="Acetylglutamate kinase">
    <location>
        <begin position="1"/>
        <end position="246"/>
    </location>
</feature>
<feature type="binding site" evidence="1">
    <location>
        <begin position="30"/>
        <end position="31"/>
    </location>
    <ligand>
        <name>substrate</name>
    </ligand>
</feature>
<feature type="binding site" evidence="1">
    <location>
        <position position="52"/>
    </location>
    <ligand>
        <name>substrate</name>
    </ligand>
</feature>
<feature type="binding site" evidence="1">
    <location>
        <position position="151"/>
    </location>
    <ligand>
        <name>substrate</name>
    </ligand>
</feature>
<feature type="site" description="Transition state stabilizer" evidence="1">
    <location>
        <position position="5"/>
    </location>
</feature>
<feature type="site" description="Transition state stabilizer" evidence="1">
    <location>
        <position position="214"/>
    </location>
</feature>
<evidence type="ECO:0000255" key="1">
    <source>
        <dbReference type="HAMAP-Rule" id="MF_00082"/>
    </source>
</evidence>
<proteinExistence type="inferred from homology"/>
<dbReference type="EC" id="2.7.2.8" evidence="1"/>
<dbReference type="EMBL" id="AE009439">
    <property type="protein sequence ID" value="AAM02844.1"/>
    <property type="molecule type" value="Genomic_DNA"/>
</dbReference>
<dbReference type="RefSeq" id="WP_011019999.1">
    <property type="nucleotide sequence ID" value="NC_003551.1"/>
</dbReference>
<dbReference type="SMR" id="Q8TUX2"/>
<dbReference type="FunCoup" id="Q8TUX2">
    <property type="interactions" value="111"/>
</dbReference>
<dbReference type="STRING" id="190192.MK1631"/>
<dbReference type="PaxDb" id="190192-MK1631"/>
<dbReference type="EnsemblBacteria" id="AAM02844">
    <property type="protein sequence ID" value="AAM02844"/>
    <property type="gene ID" value="MK1631"/>
</dbReference>
<dbReference type="GeneID" id="1478226"/>
<dbReference type="KEGG" id="mka:MK1631"/>
<dbReference type="PATRIC" id="fig|190192.8.peg.1794"/>
<dbReference type="HOGENOM" id="CLU_053680_1_0_2"/>
<dbReference type="InParanoid" id="Q8TUX2"/>
<dbReference type="OrthoDB" id="6816at2157"/>
<dbReference type="UniPathway" id="UPA00068">
    <property type="reaction ID" value="UER00107"/>
</dbReference>
<dbReference type="Proteomes" id="UP000001826">
    <property type="component" value="Chromosome"/>
</dbReference>
<dbReference type="GO" id="GO:0005737">
    <property type="term" value="C:cytoplasm"/>
    <property type="evidence" value="ECO:0007669"/>
    <property type="project" value="UniProtKB-SubCell"/>
</dbReference>
<dbReference type="GO" id="GO:0003991">
    <property type="term" value="F:acetylglutamate kinase activity"/>
    <property type="evidence" value="ECO:0007669"/>
    <property type="project" value="UniProtKB-UniRule"/>
</dbReference>
<dbReference type="GO" id="GO:0005524">
    <property type="term" value="F:ATP binding"/>
    <property type="evidence" value="ECO:0007669"/>
    <property type="project" value="UniProtKB-UniRule"/>
</dbReference>
<dbReference type="GO" id="GO:0042450">
    <property type="term" value="P:arginine biosynthetic process via ornithine"/>
    <property type="evidence" value="ECO:0007669"/>
    <property type="project" value="UniProtKB-UniRule"/>
</dbReference>
<dbReference type="GO" id="GO:0006526">
    <property type="term" value="P:L-arginine biosynthetic process"/>
    <property type="evidence" value="ECO:0007669"/>
    <property type="project" value="UniProtKB-UniPathway"/>
</dbReference>
<dbReference type="CDD" id="cd04238">
    <property type="entry name" value="AAK_NAGK-like"/>
    <property type="match status" value="1"/>
</dbReference>
<dbReference type="FunFam" id="3.40.1160.10:FF:000004">
    <property type="entry name" value="Acetylglutamate kinase"/>
    <property type="match status" value="1"/>
</dbReference>
<dbReference type="Gene3D" id="3.40.1160.10">
    <property type="entry name" value="Acetylglutamate kinase-like"/>
    <property type="match status" value="1"/>
</dbReference>
<dbReference type="HAMAP" id="MF_00082">
    <property type="entry name" value="ArgB"/>
    <property type="match status" value="1"/>
</dbReference>
<dbReference type="InterPro" id="IPR036393">
    <property type="entry name" value="AceGlu_kinase-like_sf"/>
</dbReference>
<dbReference type="InterPro" id="IPR004662">
    <property type="entry name" value="AcgluKinase_fam"/>
</dbReference>
<dbReference type="InterPro" id="IPR037528">
    <property type="entry name" value="ArgB"/>
</dbReference>
<dbReference type="InterPro" id="IPR001048">
    <property type="entry name" value="Asp/Glu/Uridylate_kinase"/>
</dbReference>
<dbReference type="InterPro" id="IPR001057">
    <property type="entry name" value="Glu/AcGlu_kinase"/>
</dbReference>
<dbReference type="NCBIfam" id="TIGR00761">
    <property type="entry name" value="argB"/>
    <property type="match status" value="1"/>
</dbReference>
<dbReference type="PANTHER" id="PTHR23342">
    <property type="entry name" value="N-ACETYLGLUTAMATE SYNTHASE"/>
    <property type="match status" value="1"/>
</dbReference>
<dbReference type="PANTHER" id="PTHR23342:SF0">
    <property type="entry name" value="N-ACETYLGLUTAMATE SYNTHASE, MITOCHONDRIAL"/>
    <property type="match status" value="1"/>
</dbReference>
<dbReference type="Pfam" id="PF00696">
    <property type="entry name" value="AA_kinase"/>
    <property type="match status" value="1"/>
</dbReference>
<dbReference type="PIRSF" id="PIRSF000728">
    <property type="entry name" value="NAGK"/>
    <property type="match status" value="1"/>
</dbReference>
<dbReference type="PRINTS" id="PR00474">
    <property type="entry name" value="GLU5KINASE"/>
</dbReference>
<dbReference type="SUPFAM" id="SSF53633">
    <property type="entry name" value="Carbamate kinase-like"/>
    <property type="match status" value="1"/>
</dbReference>
<organism>
    <name type="scientific">Methanopyrus kandleri (strain AV19 / DSM 6324 / JCM 9639 / NBRC 100938)</name>
    <dbReference type="NCBI Taxonomy" id="190192"/>
    <lineage>
        <taxon>Archaea</taxon>
        <taxon>Methanobacteriati</taxon>
        <taxon>Methanobacteriota</taxon>
        <taxon>Methanomada group</taxon>
        <taxon>Methanopyri</taxon>
        <taxon>Methanopyrales</taxon>
        <taxon>Methanopyraceae</taxon>
        <taxon>Methanopyrus</taxon>
    </lineage>
</organism>
<sequence>MEVIKVGGEVLDRVEDLARVIDDSILVHGGGPEVSDVMERMGLEPRFVRGLRVTDRETLQVVMMVLAGLVNKRLVAELRSEGINALGLSGVDGGLLIAEKRSEVVDGEEVDLGYVGDVKRVNAELLESLLDAGYVPVVAPLGAGEDGTVYNVNADTAAGAIAGAVRADRLVLLTDVPGVLEDLDDPETLIERVRPEDVEELEEKGIVTGGMVPKLEAAKMAVEAGCREAVITNLEGLLEGRGTIVR</sequence>